<organism>
    <name type="scientific">Cupriavidus necator (strain ATCC 17699 / DSM 428 / KCTC 22496 / NCIMB 10442 / H16 / Stanier 337)</name>
    <name type="common">Ralstonia eutropha</name>
    <dbReference type="NCBI Taxonomy" id="381666"/>
    <lineage>
        <taxon>Bacteria</taxon>
        <taxon>Pseudomonadati</taxon>
        <taxon>Pseudomonadota</taxon>
        <taxon>Betaproteobacteria</taxon>
        <taxon>Burkholderiales</taxon>
        <taxon>Burkholderiaceae</taxon>
        <taxon>Cupriavidus</taxon>
    </lineage>
</organism>
<proteinExistence type="inferred from homology"/>
<gene>
    <name evidence="1" type="primary">atpC</name>
    <name type="ordered locus">H16_A3636</name>
</gene>
<sequence length="138" mass="14557">MATILVDVVSAEASIFSGQAKFVALPGESGELGILPGHTPLITRIQPGAVRIEKEDGSEEFVFVAGGILEVQPKHVTVLADTAIRGGDLDEAKAQEAKRAAEELMQNQSSDLDLARAQSELAVAAAQLAAIARLRRKK</sequence>
<keyword id="KW-0066">ATP synthesis</keyword>
<keyword id="KW-0997">Cell inner membrane</keyword>
<keyword id="KW-1003">Cell membrane</keyword>
<keyword id="KW-0139">CF(1)</keyword>
<keyword id="KW-0375">Hydrogen ion transport</keyword>
<keyword id="KW-0406">Ion transport</keyword>
<keyword id="KW-0472">Membrane</keyword>
<keyword id="KW-1185">Reference proteome</keyword>
<keyword id="KW-0813">Transport</keyword>
<protein>
    <recommendedName>
        <fullName evidence="1">ATP synthase epsilon chain</fullName>
    </recommendedName>
    <alternativeName>
        <fullName evidence="1">ATP synthase F1 sector epsilon subunit</fullName>
    </alternativeName>
    <alternativeName>
        <fullName evidence="1">F-ATPase epsilon subunit</fullName>
    </alternativeName>
</protein>
<evidence type="ECO:0000255" key="1">
    <source>
        <dbReference type="HAMAP-Rule" id="MF_00530"/>
    </source>
</evidence>
<name>ATPE_CUPNH</name>
<comment type="function">
    <text evidence="1">Produces ATP from ADP in the presence of a proton gradient across the membrane.</text>
</comment>
<comment type="subunit">
    <text evidence="1">F-type ATPases have 2 components, CF(1) - the catalytic core - and CF(0) - the membrane proton channel. CF(1) has five subunits: alpha(3), beta(3), gamma(1), delta(1), epsilon(1). CF(0) has three main subunits: a, b and c.</text>
</comment>
<comment type="subcellular location">
    <subcellularLocation>
        <location evidence="1">Cell inner membrane</location>
        <topology evidence="1">Peripheral membrane protein</topology>
    </subcellularLocation>
</comment>
<comment type="similarity">
    <text evidence="1">Belongs to the ATPase epsilon chain family.</text>
</comment>
<dbReference type="EMBL" id="AM260479">
    <property type="protein sequence ID" value="CAJ94693.1"/>
    <property type="molecule type" value="Genomic_DNA"/>
</dbReference>
<dbReference type="RefSeq" id="WP_010811262.1">
    <property type="nucleotide sequence ID" value="NZ_CP039287.1"/>
</dbReference>
<dbReference type="SMR" id="Q0K5M8"/>
<dbReference type="STRING" id="381666.H16_A3636"/>
<dbReference type="KEGG" id="reh:H16_A3636"/>
<dbReference type="eggNOG" id="COG0355">
    <property type="taxonomic scope" value="Bacteria"/>
</dbReference>
<dbReference type="HOGENOM" id="CLU_084338_2_0_4"/>
<dbReference type="OrthoDB" id="9791445at2"/>
<dbReference type="Proteomes" id="UP000008210">
    <property type="component" value="Chromosome 1"/>
</dbReference>
<dbReference type="GO" id="GO:0005886">
    <property type="term" value="C:plasma membrane"/>
    <property type="evidence" value="ECO:0007669"/>
    <property type="project" value="UniProtKB-SubCell"/>
</dbReference>
<dbReference type="GO" id="GO:0045259">
    <property type="term" value="C:proton-transporting ATP synthase complex"/>
    <property type="evidence" value="ECO:0007669"/>
    <property type="project" value="UniProtKB-KW"/>
</dbReference>
<dbReference type="GO" id="GO:0005524">
    <property type="term" value="F:ATP binding"/>
    <property type="evidence" value="ECO:0007669"/>
    <property type="project" value="UniProtKB-UniRule"/>
</dbReference>
<dbReference type="GO" id="GO:0046933">
    <property type="term" value="F:proton-transporting ATP synthase activity, rotational mechanism"/>
    <property type="evidence" value="ECO:0007669"/>
    <property type="project" value="UniProtKB-UniRule"/>
</dbReference>
<dbReference type="CDD" id="cd12152">
    <property type="entry name" value="F1-ATPase_delta"/>
    <property type="match status" value="1"/>
</dbReference>
<dbReference type="FunFam" id="2.60.15.10:FF:000001">
    <property type="entry name" value="ATP synthase epsilon chain"/>
    <property type="match status" value="1"/>
</dbReference>
<dbReference type="Gene3D" id="1.20.5.440">
    <property type="entry name" value="ATP synthase delta/epsilon subunit, C-terminal domain"/>
    <property type="match status" value="1"/>
</dbReference>
<dbReference type="Gene3D" id="2.60.15.10">
    <property type="entry name" value="F0F1 ATP synthase delta/epsilon subunit, N-terminal"/>
    <property type="match status" value="1"/>
</dbReference>
<dbReference type="HAMAP" id="MF_00530">
    <property type="entry name" value="ATP_synth_epsil_bac"/>
    <property type="match status" value="1"/>
</dbReference>
<dbReference type="InterPro" id="IPR036794">
    <property type="entry name" value="ATP_F1_dsu/esu_C_sf"/>
</dbReference>
<dbReference type="InterPro" id="IPR001469">
    <property type="entry name" value="ATP_synth_F1_dsu/esu"/>
</dbReference>
<dbReference type="InterPro" id="IPR020546">
    <property type="entry name" value="ATP_synth_F1_dsu/esu_N"/>
</dbReference>
<dbReference type="InterPro" id="IPR020547">
    <property type="entry name" value="ATP_synth_F1_esu_C"/>
</dbReference>
<dbReference type="InterPro" id="IPR036771">
    <property type="entry name" value="ATPsynth_dsu/esu_N"/>
</dbReference>
<dbReference type="NCBIfam" id="TIGR01216">
    <property type="entry name" value="ATP_synt_epsi"/>
    <property type="match status" value="1"/>
</dbReference>
<dbReference type="NCBIfam" id="NF001847">
    <property type="entry name" value="PRK00571.1-4"/>
    <property type="match status" value="1"/>
</dbReference>
<dbReference type="PANTHER" id="PTHR13822">
    <property type="entry name" value="ATP SYNTHASE DELTA/EPSILON CHAIN"/>
    <property type="match status" value="1"/>
</dbReference>
<dbReference type="PANTHER" id="PTHR13822:SF10">
    <property type="entry name" value="ATP SYNTHASE EPSILON CHAIN, CHLOROPLASTIC"/>
    <property type="match status" value="1"/>
</dbReference>
<dbReference type="Pfam" id="PF00401">
    <property type="entry name" value="ATP-synt_DE"/>
    <property type="match status" value="1"/>
</dbReference>
<dbReference type="Pfam" id="PF02823">
    <property type="entry name" value="ATP-synt_DE_N"/>
    <property type="match status" value="1"/>
</dbReference>
<dbReference type="SUPFAM" id="SSF46604">
    <property type="entry name" value="Epsilon subunit of F1F0-ATP synthase C-terminal domain"/>
    <property type="match status" value="1"/>
</dbReference>
<dbReference type="SUPFAM" id="SSF51344">
    <property type="entry name" value="Epsilon subunit of F1F0-ATP synthase N-terminal domain"/>
    <property type="match status" value="1"/>
</dbReference>
<reference key="1">
    <citation type="journal article" date="2006" name="Nat. Biotechnol.">
        <title>Genome sequence of the bioplastic-producing 'Knallgas' bacterium Ralstonia eutropha H16.</title>
        <authorList>
            <person name="Pohlmann A."/>
            <person name="Fricke W.F."/>
            <person name="Reinecke F."/>
            <person name="Kusian B."/>
            <person name="Liesegang H."/>
            <person name="Cramm R."/>
            <person name="Eitinger T."/>
            <person name="Ewering C."/>
            <person name="Poetter M."/>
            <person name="Schwartz E."/>
            <person name="Strittmatter A."/>
            <person name="Voss I."/>
            <person name="Gottschalk G."/>
            <person name="Steinbuechel A."/>
            <person name="Friedrich B."/>
            <person name="Bowien B."/>
        </authorList>
    </citation>
    <scope>NUCLEOTIDE SEQUENCE [LARGE SCALE GENOMIC DNA]</scope>
    <source>
        <strain>ATCC 17699 / DSM 428 / KCTC 22496 / NCIMB 10442 / H16 / Stanier 337</strain>
    </source>
</reference>
<accession>Q0K5M8</accession>
<feature type="chain" id="PRO_1000056523" description="ATP synthase epsilon chain">
    <location>
        <begin position="1"/>
        <end position="138"/>
    </location>
</feature>